<feature type="chain" id="PRO_0000436384" description="Fucose-1-phosphate guanylyltransferase">
    <location>
        <begin position="1"/>
        <end position="590"/>
    </location>
</feature>
<feature type="sequence conflict" description="In Ref. 1; CAC81971." evidence="4" ref="1">
    <original>FNA</original>
    <variation>LIS</variation>
    <location>
        <begin position="231"/>
        <end position="233"/>
    </location>
</feature>
<feature type="sequence conflict" description="In Ref. 1; CAC81971." evidence="4" ref="1">
    <original>R</original>
    <variation>G</variation>
    <location>
        <position position="238"/>
    </location>
</feature>
<feature type="sequence conflict" description="In Ref. 1; CAC81971." evidence="4" ref="1">
    <original>G</original>
    <variation>A</variation>
    <location>
        <position position="241"/>
    </location>
</feature>
<feature type="sequence conflict" description="In Ref. 1; CAC81971." evidence="4" ref="1">
    <original>H</original>
    <variation>R</variation>
    <location>
        <position position="270"/>
    </location>
</feature>
<feature type="sequence conflict" description="In Ref. 1; CAC81971." evidence="4" ref="1">
    <original>Y</original>
    <variation>N</variation>
    <location>
        <position position="293"/>
    </location>
</feature>
<feature type="sequence conflict" description="In Ref. 1; CAC81971." evidence="4" ref="1">
    <original>L</original>
    <variation>I</variation>
    <location>
        <position position="297"/>
    </location>
</feature>
<feature type="sequence conflict" description="In Ref. 5; AAI10552/AAI10553." evidence="4" ref="5">
    <original>C</original>
    <variation>R</variation>
    <location>
        <position position="517"/>
    </location>
</feature>
<dbReference type="EC" id="2.7.7.30" evidence="2"/>
<dbReference type="EMBL" id="AJ276067">
    <property type="protein sequence ID" value="CAC81971.2"/>
    <property type="molecule type" value="mRNA"/>
</dbReference>
<dbReference type="EMBL" id="AK028640">
    <property type="protein sequence ID" value="BAC26043.1"/>
    <property type="status" value="ALT_FRAME"/>
    <property type="molecule type" value="mRNA"/>
</dbReference>
<dbReference type="EMBL" id="AC144762">
    <property type="status" value="NOT_ANNOTATED_CDS"/>
    <property type="molecule type" value="Genomic_DNA"/>
</dbReference>
<dbReference type="EMBL" id="CH466532">
    <property type="protein sequence ID" value="EDL11881.1"/>
    <property type="molecule type" value="Genomic_DNA"/>
</dbReference>
<dbReference type="EMBL" id="BC110551">
    <property type="protein sequence ID" value="AAI10552.1"/>
    <property type="molecule type" value="mRNA"/>
</dbReference>
<dbReference type="EMBL" id="BC110552">
    <property type="protein sequence ID" value="AAI10553.1"/>
    <property type="molecule type" value="mRNA"/>
</dbReference>
<dbReference type="CCDS" id="CCDS38681.1"/>
<dbReference type="RefSeq" id="NP_083606.2">
    <property type="nucleotide sequence ID" value="NM_029330.2"/>
</dbReference>
<dbReference type="FunCoup" id="G5E8F4">
    <property type="interactions" value="193"/>
</dbReference>
<dbReference type="STRING" id="10090.ENSMUSP00000068939"/>
<dbReference type="PhosphoSitePlus" id="G5E8F4"/>
<dbReference type="PaxDb" id="10090-ENSMUSP00000068939"/>
<dbReference type="ProteomicsDB" id="267405"/>
<dbReference type="Pumba" id="G5E8F4"/>
<dbReference type="Antibodypedia" id="53161">
    <property type="antibodies" value="159 antibodies from 21 providers"/>
</dbReference>
<dbReference type="Ensembl" id="ENSMUST00000066568.6">
    <property type="protein sequence ID" value="ENSMUSP00000068939.5"/>
    <property type="gene ID" value="ENSMUSG00000053870.8"/>
</dbReference>
<dbReference type="GeneID" id="75540"/>
<dbReference type="KEGG" id="mmu:75540"/>
<dbReference type="UCSC" id="uc008ruu.1">
    <property type="organism name" value="mouse"/>
</dbReference>
<dbReference type="AGR" id="MGI:1922790"/>
<dbReference type="CTD" id="8790"/>
<dbReference type="MGI" id="MGI:1922790">
    <property type="gene designation" value="Fpgt"/>
</dbReference>
<dbReference type="VEuPathDB" id="HostDB:ENSMUSG00000053870"/>
<dbReference type="eggNOG" id="ENOG502QRKZ">
    <property type="taxonomic scope" value="Eukaryota"/>
</dbReference>
<dbReference type="GeneTree" id="ENSGT00780000122095"/>
<dbReference type="HOGENOM" id="CLU_508637_0_0_1"/>
<dbReference type="InParanoid" id="G5E8F4"/>
<dbReference type="OMA" id="DMIAYRE"/>
<dbReference type="OrthoDB" id="10062280at2759"/>
<dbReference type="PhylomeDB" id="G5E8F4"/>
<dbReference type="TreeFam" id="TF328750"/>
<dbReference type="Reactome" id="R-MMU-6787639">
    <property type="pathway name" value="GDP-fucose biosynthesis"/>
</dbReference>
<dbReference type="BioGRID-ORCS" id="75540">
    <property type="hits" value="1 hit in 76 CRISPR screens"/>
</dbReference>
<dbReference type="PRO" id="PR:G5E8F4"/>
<dbReference type="Proteomes" id="UP000000589">
    <property type="component" value="Chromosome 3"/>
</dbReference>
<dbReference type="RNAct" id="G5E8F4">
    <property type="molecule type" value="protein"/>
</dbReference>
<dbReference type="Bgee" id="ENSMUSG00000053870">
    <property type="expression patterns" value="Expressed in animal zygote and 227 other cell types or tissues"/>
</dbReference>
<dbReference type="GO" id="GO:0005737">
    <property type="term" value="C:cytoplasm"/>
    <property type="evidence" value="ECO:0007669"/>
    <property type="project" value="UniProtKB-SubCell"/>
</dbReference>
<dbReference type="GO" id="GO:0047341">
    <property type="term" value="F:fucose-1-phosphate guanylyltransferase activity"/>
    <property type="evidence" value="ECO:0000314"/>
    <property type="project" value="UniProtKB"/>
</dbReference>
<dbReference type="GO" id="GO:0005525">
    <property type="term" value="F:GTP binding"/>
    <property type="evidence" value="ECO:0007669"/>
    <property type="project" value="UniProtKB-KW"/>
</dbReference>
<dbReference type="GO" id="GO:0042352">
    <property type="term" value="P:GDP-L-fucose salvage"/>
    <property type="evidence" value="ECO:0000314"/>
    <property type="project" value="MGI"/>
</dbReference>
<dbReference type="GO" id="GO:0042354">
    <property type="term" value="P:L-fucose metabolic process"/>
    <property type="evidence" value="ECO:0000314"/>
    <property type="project" value="UniProtKB"/>
</dbReference>
<dbReference type="Gene3D" id="2.160.10.10">
    <property type="entry name" value="Hexapeptide repeat proteins"/>
    <property type="match status" value="1"/>
</dbReference>
<dbReference type="InterPro" id="IPR012120">
    <property type="entry name" value="Fucose-1-phosphate_GuaTrfase"/>
</dbReference>
<dbReference type="InterPro" id="IPR012887">
    <property type="entry name" value="GDP_fucose_pyrophosphorylase"/>
</dbReference>
<dbReference type="InterPro" id="IPR011004">
    <property type="entry name" value="Trimer_LpxA-like_sf"/>
</dbReference>
<dbReference type="PANTHER" id="PTHR15045">
    <property type="entry name" value="FUCOSE-1-PHOSPHATE GUANYLYLTRANSFERASE"/>
    <property type="match status" value="1"/>
</dbReference>
<dbReference type="PANTHER" id="PTHR15045:SF1">
    <property type="entry name" value="FUCOSE-1-PHOSPHATE GUANYLYLTRANSFERASE"/>
    <property type="match status" value="1"/>
</dbReference>
<dbReference type="Pfam" id="PF07959">
    <property type="entry name" value="Fucose_pyrophosphorylase"/>
    <property type="match status" value="1"/>
</dbReference>
<dbReference type="PIRSF" id="PIRSF036640">
    <property type="entry name" value="FPGT"/>
    <property type="match status" value="1"/>
</dbReference>
<dbReference type="SUPFAM" id="SSF51161">
    <property type="entry name" value="Trimeric LpxA-like enzymes"/>
    <property type="match status" value="1"/>
</dbReference>
<keyword id="KW-0963">Cytoplasm</keyword>
<keyword id="KW-0342">GTP-binding</keyword>
<keyword id="KW-0547">Nucleotide-binding</keyword>
<keyword id="KW-0548">Nucleotidyltransferase</keyword>
<keyword id="KW-1185">Reference proteome</keyword>
<keyword id="KW-0808">Transferase</keyword>
<reference evidence="8" key="1">
    <citation type="journal article" date="2004" name="Eur. J. Biochem.">
        <title>Cloning and expression of murine enzymes involved in the salvage pathway of GDP-L-fucose.</title>
        <authorList>
            <person name="Niittymaki J."/>
            <person name="Mattila P."/>
            <person name="Roos C."/>
            <person name="Huopaniemi L."/>
            <person name="Sjoblom S."/>
            <person name="Renkonen R."/>
        </authorList>
    </citation>
    <scope>NUCLEOTIDE SEQUENCE [MRNA]</scope>
    <scope>FUNCTION</scope>
    <scope>CATALYTIC ACTIVITY</scope>
    <scope>TISSUE SPECIFICITY</scope>
    <source>
        <tissue evidence="8">Kidney</tissue>
    </source>
</reference>
<reference evidence="7" key="2">
    <citation type="journal article" date="2005" name="Science">
        <title>The transcriptional landscape of the mammalian genome.</title>
        <authorList>
            <person name="Carninci P."/>
            <person name="Kasukawa T."/>
            <person name="Katayama S."/>
            <person name="Gough J."/>
            <person name="Frith M.C."/>
            <person name="Maeda N."/>
            <person name="Oyama R."/>
            <person name="Ravasi T."/>
            <person name="Lenhard B."/>
            <person name="Wells C."/>
            <person name="Kodzius R."/>
            <person name="Shimokawa K."/>
            <person name="Bajic V.B."/>
            <person name="Brenner S.E."/>
            <person name="Batalov S."/>
            <person name="Forrest A.R."/>
            <person name="Zavolan M."/>
            <person name="Davis M.J."/>
            <person name="Wilming L.G."/>
            <person name="Aidinis V."/>
            <person name="Allen J.E."/>
            <person name="Ambesi-Impiombato A."/>
            <person name="Apweiler R."/>
            <person name="Aturaliya R.N."/>
            <person name="Bailey T.L."/>
            <person name="Bansal M."/>
            <person name="Baxter L."/>
            <person name="Beisel K.W."/>
            <person name="Bersano T."/>
            <person name="Bono H."/>
            <person name="Chalk A.M."/>
            <person name="Chiu K.P."/>
            <person name="Choudhary V."/>
            <person name="Christoffels A."/>
            <person name="Clutterbuck D.R."/>
            <person name="Crowe M.L."/>
            <person name="Dalla E."/>
            <person name="Dalrymple B.P."/>
            <person name="de Bono B."/>
            <person name="Della Gatta G."/>
            <person name="di Bernardo D."/>
            <person name="Down T."/>
            <person name="Engstrom P."/>
            <person name="Fagiolini M."/>
            <person name="Faulkner G."/>
            <person name="Fletcher C.F."/>
            <person name="Fukushima T."/>
            <person name="Furuno M."/>
            <person name="Futaki S."/>
            <person name="Gariboldi M."/>
            <person name="Georgii-Hemming P."/>
            <person name="Gingeras T.R."/>
            <person name="Gojobori T."/>
            <person name="Green R.E."/>
            <person name="Gustincich S."/>
            <person name="Harbers M."/>
            <person name="Hayashi Y."/>
            <person name="Hensch T.K."/>
            <person name="Hirokawa N."/>
            <person name="Hill D."/>
            <person name="Huminiecki L."/>
            <person name="Iacono M."/>
            <person name="Ikeo K."/>
            <person name="Iwama A."/>
            <person name="Ishikawa T."/>
            <person name="Jakt M."/>
            <person name="Kanapin A."/>
            <person name="Katoh M."/>
            <person name="Kawasawa Y."/>
            <person name="Kelso J."/>
            <person name="Kitamura H."/>
            <person name="Kitano H."/>
            <person name="Kollias G."/>
            <person name="Krishnan S.P."/>
            <person name="Kruger A."/>
            <person name="Kummerfeld S.K."/>
            <person name="Kurochkin I.V."/>
            <person name="Lareau L.F."/>
            <person name="Lazarevic D."/>
            <person name="Lipovich L."/>
            <person name="Liu J."/>
            <person name="Liuni S."/>
            <person name="McWilliam S."/>
            <person name="Madan Babu M."/>
            <person name="Madera M."/>
            <person name="Marchionni L."/>
            <person name="Matsuda H."/>
            <person name="Matsuzawa S."/>
            <person name="Miki H."/>
            <person name="Mignone F."/>
            <person name="Miyake S."/>
            <person name="Morris K."/>
            <person name="Mottagui-Tabar S."/>
            <person name="Mulder N."/>
            <person name="Nakano N."/>
            <person name="Nakauchi H."/>
            <person name="Ng P."/>
            <person name="Nilsson R."/>
            <person name="Nishiguchi S."/>
            <person name="Nishikawa S."/>
            <person name="Nori F."/>
            <person name="Ohara O."/>
            <person name="Okazaki Y."/>
            <person name="Orlando V."/>
            <person name="Pang K.C."/>
            <person name="Pavan W.J."/>
            <person name="Pavesi G."/>
            <person name="Pesole G."/>
            <person name="Petrovsky N."/>
            <person name="Piazza S."/>
            <person name="Reed J."/>
            <person name="Reid J.F."/>
            <person name="Ring B.Z."/>
            <person name="Ringwald M."/>
            <person name="Rost B."/>
            <person name="Ruan Y."/>
            <person name="Salzberg S.L."/>
            <person name="Sandelin A."/>
            <person name="Schneider C."/>
            <person name="Schoenbach C."/>
            <person name="Sekiguchi K."/>
            <person name="Semple C.A."/>
            <person name="Seno S."/>
            <person name="Sessa L."/>
            <person name="Sheng Y."/>
            <person name="Shibata Y."/>
            <person name="Shimada H."/>
            <person name="Shimada K."/>
            <person name="Silva D."/>
            <person name="Sinclair B."/>
            <person name="Sperling S."/>
            <person name="Stupka E."/>
            <person name="Sugiura K."/>
            <person name="Sultana R."/>
            <person name="Takenaka Y."/>
            <person name="Taki K."/>
            <person name="Tammoja K."/>
            <person name="Tan S.L."/>
            <person name="Tang S."/>
            <person name="Taylor M.S."/>
            <person name="Tegner J."/>
            <person name="Teichmann S.A."/>
            <person name="Ueda H.R."/>
            <person name="van Nimwegen E."/>
            <person name="Verardo R."/>
            <person name="Wei C.L."/>
            <person name="Yagi K."/>
            <person name="Yamanishi H."/>
            <person name="Zabarovsky E."/>
            <person name="Zhu S."/>
            <person name="Zimmer A."/>
            <person name="Hide W."/>
            <person name="Bult C."/>
            <person name="Grimmond S.M."/>
            <person name="Teasdale R.D."/>
            <person name="Liu E.T."/>
            <person name="Brusic V."/>
            <person name="Quackenbush J."/>
            <person name="Wahlestedt C."/>
            <person name="Mattick J.S."/>
            <person name="Hume D.A."/>
            <person name="Kai C."/>
            <person name="Sasaki D."/>
            <person name="Tomaru Y."/>
            <person name="Fukuda S."/>
            <person name="Kanamori-Katayama M."/>
            <person name="Suzuki M."/>
            <person name="Aoki J."/>
            <person name="Arakawa T."/>
            <person name="Iida J."/>
            <person name="Imamura K."/>
            <person name="Itoh M."/>
            <person name="Kato T."/>
            <person name="Kawaji H."/>
            <person name="Kawagashira N."/>
            <person name="Kawashima T."/>
            <person name="Kojima M."/>
            <person name="Kondo S."/>
            <person name="Konno H."/>
            <person name="Nakano K."/>
            <person name="Ninomiya N."/>
            <person name="Nishio T."/>
            <person name="Okada M."/>
            <person name="Plessy C."/>
            <person name="Shibata K."/>
            <person name="Shiraki T."/>
            <person name="Suzuki S."/>
            <person name="Tagami M."/>
            <person name="Waki K."/>
            <person name="Watahiki A."/>
            <person name="Okamura-Oho Y."/>
            <person name="Suzuki H."/>
            <person name="Kawai J."/>
            <person name="Hayashizaki Y."/>
        </authorList>
    </citation>
    <scope>NUCLEOTIDE SEQUENCE [LARGE SCALE MRNA]</scope>
    <source>
        <strain evidence="7">C57BL/6J</strain>
        <tissue evidence="7">Skin</tissue>
    </source>
</reference>
<reference evidence="11" key="3">
    <citation type="journal article" date="2009" name="PLoS Biol.">
        <title>Lineage-specific biology revealed by a finished genome assembly of the mouse.</title>
        <authorList>
            <person name="Church D.M."/>
            <person name="Goodstadt L."/>
            <person name="Hillier L.W."/>
            <person name="Zody M.C."/>
            <person name="Goldstein S."/>
            <person name="She X."/>
            <person name="Bult C.J."/>
            <person name="Agarwala R."/>
            <person name="Cherry J.L."/>
            <person name="DiCuccio M."/>
            <person name="Hlavina W."/>
            <person name="Kapustin Y."/>
            <person name="Meric P."/>
            <person name="Maglott D."/>
            <person name="Birtle Z."/>
            <person name="Marques A.C."/>
            <person name="Graves T."/>
            <person name="Zhou S."/>
            <person name="Teague B."/>
            <person name="Potamousis K."/>
            <person name="Churas C."/>
            <person name="Place M."/>
            <person name="Herschleb J."/>
            <person name="Runnheim R."/>
            <person name="Forrest D."/>
            <person name="Amos-Landgraf J."/>
            <person name="Schwartz D.C."/>
            <person name="Cheng Z."/>
            <person name="Lindblad-Toh K."/>
            <person name="Eichler E.E."/>
            <person name="Ponting C.P."/>
        </authorList>
    </citation>
    <scope>NUCLEOTIDE SEQUENCE [LARGE SCALE GENOMIC DNA]</scope>
    <source>
        <strain>C57BL/6J</strain>
    </source>
</reference>
<reference evidence="9" key="4">
    <citation type="submission" date="2005-08" db="EMBL/GenBank/DDBJ databases">
        <authorList>
            <person name="Mural R.J."/>
            <person name="Adams M.D."/>
            <person name="Myers E.W."/>
            <person name="Smith H.O."/>
            <person name="Venter J.C."/>
        </authorList>
    </citation>
    <scope>NUCLEOTIDE SEQUENCE [LARGE SCALE GENOMIC DNA]</scope>
</reference>
<reference evidence="6" key="5">
    <citation type="journal article" date="2004" name="Genome Res.">
        <title>The status, quality, and expansion of the NIH full-length cDNA project: the Mammalian Gene Collection (MGC).</title>
        <authorList>
            <consortium name="The MGC Project Team"/>
        </authorList>
    </citation>
    <scope>NUCLEOTIDE SEQUENCE [LARGE SCALE MRNA]</scope>
</reference>
<proteinExistence type="evidence at protein level"/>
<comment type="function">
    <text evidence="2 5">Catalyzes the formation of GDP-L-fucose from GTP and L-fucose-1-phosphate (PubMed:14686921). Functions as a salvage pathway to reutilize L-fucose arising from the turnover of glycoproteins and glycolipids (Probable).</text>
</comment>
<comment type="catalytic activity">
    <reaction evidence="2">
        <text>beta-L-fucose 1-phosphate + GTP + H(+) = GDP-beta-L-fucose + diphosphate</text>
        <dbReference type="Rhea" id="RHEA:13549"/>
        <dbReference type="ChEBI" id="CHEBI:15378"/>
        <dbReference type="ChEBI" id="CHEBI:33019"/>
        <dbReference type="ChEBI" id="CHEBI:37565"/>
        <dbReference type="ChEBI" id="CHEBI:57268"/>
        <dbReference type="ChEBI" id="CHEBI:57273"/>
        <dbReference type="EC" id="2.7.7.30"/>
    </reaction>
    <physiologicalReaction direction="left-to-right" evidence="1">
        <dbReference type="Rhea" id="RHEA:13550"/>
    </physiologicalReaction>
</comment>
<comment type="subcellular location">
    <subcellularLocation>
        <location evidence="5">Cytoplasm</location>
    </subcellularLocation>
</comment>
<comment type="tissue specificity">
    <text evidence="2">Expressed at highest levels in brain, moderately in testis, ovary and kidney, and weakly in liver, spleen, heart and lung.</text>
</comment>
<comment type="sequence caution" evidence="4">
    <conflict type="frameshift">
        <sequence resource="EMBL-CDS" id="BAC26043"/>
    </conflict>
</comment>
<accession>G5E8F4</accession>
<accession>Q2TB53</accession>
<accession>Q712G7</accession>
<accession>Q8C1A2</accession>
<protein>
    <recommendedName>
        <fullName evidence="10">Fucose-1-phosphate guanylyltransferase</fullName>
        <ecNumber evidence="2">2.7.7.30</ecNumber>
    </recommendedName>
    <alternativeName>
        <fullName evidence="1">GDP-L-fucose diphosphorylase</fullName>
    </alternativeName>
    <alternativeName>
        <fullName evidence="3">GDP-L-fucose pyrophosphorylase</fullName>
    </alternativeName>
</protein>
<gene>
    <name evidence="10" type="primary">Fpgt</name>
</gene>
<sequence length="590" mass="65362">MASLREATLRKLRRFSELRGKPVAAGEFWDVVAITAADEKQELAYKQQLSEKLKKRELPLGVQYHVFPDPAGTKIGNGGSTLCSLECLESLCGDKWNSLKVLLIHSGGYSQRLPNASALGKIFTALPLGEPIYQMLELKLAMYVDFPSNMRPGVLVTCADDIELYSVGDSEYIAFDQPGFTALAHPSSLAVGTTHGVFVLHSDSSLQHGDLEYRQCYQFLHKPTIENMHRFNAVHRQRSFGQQNLSGGDTDCLPLHTEYVYTDSLFYMDHKSAKKLLDFYKSEGPLNCEIDAYGDFLQALGPGATAEYTRNTSHVTKEESQLLDMRQKIFHLLKGTPLNVVVLNNSRFYHIGTLQEYLLHFTSDSALKTELGLQSIAFSVSPSVPERSSGTACVIHSIVDSGCCVAPGSVVEYSRLGPEVSIGENCIISSSVIAKTVVPAYSFLCSLSVKINGHLKYSTMVFGMQDNLKNSVKTLEDIKALQFFGVCFLSCLDIWNLKATEKLFSGNKMNLSLWTACIFPVCSSLSESATASLGMLSAVRNHSPFNLSDFNLLSIQEMLVYKDVQDMLAYREHIFLEISSNKNQSDLEKS</sequence>
<evidence type="ECO:0000250" key="1">
    <source>
        <dbReference type="UniProtKB" id="O14772"/>
    </source>
</evidence>
<evidence type="ECO:0000269" key="2">
    <source>
    </source>
</evidence>
<evidence type="ECO:0000303" key="3">
    <source>
    </source>
</evidence>
<evidence type="ECO:0000305" key="4"/>
<evidence type="ECO:0000305" key="5">
    <source>
    </source>
</evidence>
<evidence type="ECO:0000312" key="6">
    <source>
        <dbReference type="EMBL" id="AAI10552.1"/>
    </source>
</evidence>
<evidence type="ECO:0000312" key="7">
    <source>
        <dbReference type="EMBL" id="BAC26043.1"/>
    </source>
</evidence>
<evidence type="ECO:0000312" key="8">
    <source>
        <dbReference type="EMBL" id="CAC81971.2"/>
    </source>
</evidence>
<evidence type="ECO:0000312" key="9">
    <source>
        <dbReference type="EMBL" id="EDL11881.1"/>
    </source>
</evidence>
<evidence type="ECO:0000312" key="10">
    <source>
        <dbReference type="MGI" id="MGI:1922790"/>
    </source>
</evidence>
<evidence type="ECO:0000312" key="11">
    <source>
        <dbReference type="Proteomes" id="UP000000589"/>
    </source>
</evidence>
<name>FPGT_MOUSE</name>
<organism evidence="11">
    <name type="scientific">Mus musculus</name>
    <name type="common">Mouse</name>
    <dbReference type="NCBI Taxonomy" id="10090"/>
    <lineage>
        <taxon>Eukaryota</taxon>
        <taxon>Metazoa</taxon>
        <taxon>Chordata</taxon>
        <taxon>Craniata</taxon>
        <taxon>Vertebrata</taxon>
        <taxon>Euteleostomi</taxon>
        <taxon>Mammalia</taxon>
        <taxon>Eutheria</taxon>
        <taxon>Euarchontoglires</taxon>
        <taxon>Glires</taxon>
        <taxon>Rodentia</taxon>
        <taxon>Myomorpha</taxon>
        <taxon>Muroidea</taxon>
        <taxon>Muridae</taxon>
        <taxon>Murinae</taxon>
        <taxon>Mus</taxon>
        <taxon>Mus</taxon>
    </lineage>
</organism>